<accession>P37893</accession>
<gene>
    <name type="primary">pepN</name>
    <name type="ordered locus">CC_2481</name>
</gene>
<protein>
    <recommendedName>
        <fullName>Aminopeptidase N</fullName>
        <ecNumber>3.4.11.2</ecNumber>
    </recommendedName>
    <alternativeName>
        <fullName>Alpha-aminoacylpeptide hydrolase</fullName>
    </alternativeName>
</protein>
<name>AMPN_CAUVC</name>
<organism>
    <name type="scientific">Caulobacter vibrioides (strain ATCC 19089 / CIP 103742 / CB 15)</name>
    <name type="common">Caulobacter crescentus</name>
    <dbReference type="NCBI Taxonomy" id="190650"/>
    <lineage>
        <taxon>Bacteria</taxon>
        <taxon>Pseudomonadati</taxon>
        <taxon>Pseudomonadota</taxon>
        <taxon>Alphaproteobacteria</taxon>
        <taxon>Caulobacterales</taxon>
        <taxon>Caulobacteraceae</taxon>
        <taxon>Caulobacter</taxon>
    </lineage>
</organism>
<feature type="chain" id="PRO_0000095068" description="Aminopeptidase N">
    <location>
        <begin position="1"/>
        <end position="863"/>
    </location>
</feature>
<feature type="active site" description="Proton acceptor" evidence="2">
    <location>
        <position position="300"/>
    </location>
</feature>
<feature type="binding site" evidence="1">
    <location>
        <position position="124"/>
    </location>
    <ligand>
        <name>substrate</name>
    </ligand>
</feature>
<feature type="binding site" evidence="1">
    <location>
        <begin position="263"/>
        <end position="267"/>
    </location>
    <ligand>
        <name>substrate</name>
    </ligand>
</feature>
<feature type="binding site" evidence="2">
    <location>
        <position position="299"/>
    </location>
    <ligand>
        <name>Zn(2+)</name>
        <dbReference type="ChEBI" id="CHEBI:29105"/>
        <note>catalytic</note>
    </ligand>
</feature>
<feature type="binding site" evidence="2">
    <location>
        <position position="303"/>
    </location>
    <ligand>
        <name>Zn(2+)</name>
        <dbReference type="ChEBI" id="CHEBI:29105"/>
        <note>catalytic</note>
    </ligand>
</feature>
<feature type="binding site" evidence="2">
    <location>
        <position position="322"/>
    </location>
    <ligand>
        <name>Zn(2+)</name>
        <dbReference type="ChEBI" id="CHEBI:29105"/>
        <note>catalytic</note>
    </ligand>
</feature>
<feature type="site" description="Transition state stabilizer" evidence="1">
    <location>
        <position position="383"/>
    </location>
</feature>
<sequence>MRTDTPQAVNLADYRPFPFAIETTRLVFDLHPTRTRVSAELSVRRTGGKNEPLVLNGERLKLVSIAIDGRPLAAGEYGVDAERLTIAEAPDAFVLTTEVEIDPSSNKALMGLYMSGGRFCTQCEAEGFRTITYFPDRPDVLSRYSVRIEADGKFPHLLSNGNPVASGSLDGGRHFAEWSDPFPKPSYLFALVAGDLDVLADKFITMSGREVALRVFVDPGQASRAAYALDSLKRAMKWDEEAFGREYDLDLFMIVAVRDFNFGAMENKGLNIFNSSLLLADPQTATDLDYERIEAVVAHEYFHNWTGNRITCRDWFQLCLKEGFTVFRDQGLSADMRGAAVQRIKDVRALRARQFAEDAGPLAHPVRPSSYLKIDNFYTATIYEKGAEIIRMLKAILGAPAFRKGCDLYFQRHDGEATTVEAFIACFAEASGRDLSGFFGWYEQAGTPSVTIETAYDAAAGALTLTLTQSTSPTPGQPDKKPLPIPIAIGLLAADGRVLRDTEIVLLDQAQMTVRWDSIPEPPVLSALRGFSAPVNLSTDARPSDRYVLFGSDTDLFNRWEAGQTLARDLILTRAAGAPDEVGEERYADALGRALVDDAAEPAFKALLLALPSEPDLALMFEAADPAALHAARDHLRTRIAVHLGDLLRRLHGEMQINGEFSSDAAAAGRRALRNACAEALSADPHAENLARLLGHFGAARNMTDMIGGLYPMVAMGGVPREKALESFHHAWRTEPLVLDKWFAVQGRDPNPDALERVIALTQHPDFEPTNPNRLRALVSTFANFNPARFHDPSGAGYAFLADEILKVDAFNPMTAARLVEPLGGWRRYKPELGDLMRAQLERIVAHPNLSKNVLELASKALG</sequence>
<proteinExistence type="inferred from homology"/>
<evidence type="ECO:0000250" key="1"/>
<evidence type="ECO:0000255" key="2">
    <source>
        <dbReference type="PROSITE-ProRule" id="PRU10095"/>
    </source>
</evidence>
<evidence type="ECO:0000305" key="3"/>
<comment type="function">
    <text>Aminopeptidase N is involved in the degradation of intracellular peptides generated by protein breakdown during normal growth as well as in response to nutrient starvation.</text>
</comment>
<comment type="catalytic activity">
    <reaction>
        <text>Release of an N-terminal amino acid, Xaa-|-Yaa- from a peptide, amide or arylamide. Xaa is preferably Ala, but may be most amino acids including Pro (slow action). When a terminal hydrophobic residue is followed by a prolyl residue, the two may be released as an intact Xaa-Pro dipeptide.</text>
        <dbReference type="EC" id="3.4.11.2"/>
    </reaction>
</comment>
<comment type="cofactor">
    <cofactor evidence="1">
        <name>Zn(2+)</name>
        <dbReference type="ChEBI" id="CHEBI:29105"/>
    </cofactor>
    <text evidence="1">Binds 1 zinc ion per subunit.</text>
</comment>
<comment type="similarity">
    <text evidence="3">Belongs to the peptidase M1 family.</text>
</comment>
<dbReference type="EC" id="3.4.11.2"/>
<dbReference type="EMBL" id="AE005673">
    <property type="protein sequence ID" value="AAK24452.1"/>
    <property type="molecule type" value="Genomic_DNA"/>
</dbReference>
<dbReference type="EMBL" id="M91449">
    <property type="protein sequence ID" value="AAA23051.1"/>
    <property type="molecule type" value="Genomic_DNA"/>
</dbReference>
<dbReference type="PIR" id="H87556">
    <property type="entry name" value="H87556"/>
</dbReference>
<dbReference type="PIR" id="S27532">
    <property type="entry name" value="S27532"/>
</dbReference>
<dbReference type="RefSeq" id="NP_421284.1">
    <property type="nucleotide sequence ID" value="NC_002696.2"/>
</dbReference>
<dbReference type="RefSeq" id="WP_010920339.1">
    <property type="nucleotide sequence ID" value="NC_002696.2"/>
</dbReference>
<dbReference type="SMR" id="P37893"/>
<dbReference type="STRING" id="190650.CC_2481"/>
<dbReference type="MEROPS" id="M01.005"/>
<dbReference type="EnsemblBacteria" id="AAK24452">
    <property type="protein sequence ID" value="AAK24452"/>
    <property type="gene ID" value="CC_2481"/>
</dbReference>
<dbReference type="KEGG" id="ccr:CC_2481"/>
<dbReference type="PATRIC" id="fig|190650.5.peg.2499"/>
<dbReference type="eggNOG" id="COG0308">
    <property type="taxonomic scope" value="Bacteria"/>
</dbReference>
<dbReference type="HOGENOM" id="CLU_007993_2_0_5"/>
<dbReference type="BioCyc" id="CAULO:CC2481-MONOMER"/>
<dbReference type="Proteomes" id="UP000001816">
    <property type="component" value="Chromosome"/>
</dbReference>
<dbReference type="GO" id="GO:0016285">
    <property type="term" value="F:alanyl aminopeptidase activity"/>
    <property type="evidence" value="ECO:0007669"/>
    <property type="project" value="UniProtKB-EC"/>
</dbReference>
<dbReference type="GO" id="GO:0008237">
    <property type="term" value="F:metallopeptidase activity"/>
    <property type="evidence" value="ECO:0007669"/>
    <property type="project" value="UniProtKB-KW"/>
</dbReference>
<dbReference type="GO" id="GO:0008270">
    <property type="term" value="F:zinc ion binding"/>
    <property type="evidence" value="ECO:0007669"/>
    <property type="project" value="InterPro"/>
</dbReference>
<dbReference type="GO" id="GO:0006508">
    <property type="term" value="P:proteolysis"/>
    <property type="evidence" value="ECO:0007669"/>
    <property type="project" value="UniProtKB-KW"/>
</dbReference>
<dbReference type="CDD" id="cd09600">
    <property type="entry name" value="M1_APN"/>
    <property type="match status" value="1"/>
</dbReference>
<dbReference type="FunFam" id="2.60.40.1730:FF:000005">
    <property type="entry name" value="Aminopeptidase N"/>
    <property type="match status" value="1"/>
</dbReference>
<dbReference type="FunFam" id="3.30.2010.30:FF:000002">
    <property type="entry name" value="Putative aminopeptidase N"/>
    <property type="match status" value="1"/>
</dbReference>
<dbReference type="Gene3D" id="2.60.40.1840">
    <property type="match status" value="1"/>
</dbReference>
<dbReference type="Gene3D" id="3.30.2010.30">
    <property type="match status" value="1"/>
</dbReference>
<dbReference type="Gene3D" id="1.10.390.10">
    <property type="entry name" value="Neutral Protease Domain 2"/>
    <property type="match status" value="1"/>
</dbReference>
<dbReference type="Gene3D" id="1.25.50.10">
    <property type="entry name" value="Peptidase M1, alanyl aminopeptidase, C-terminal domain"/>
    <property type="match status" value="1"/>
</dbReference>
<dbReference type="Gene3D" id="2.60.40.1730">
    <property type="entry name" value="tricorn interacting facor f3 domain"/>
    <property type="match status" value="1"/>
</dbReference>
<dbReference type="InterPro" id="IPR045357">
    <property type="entry name" value="Aminopeptidase_N-like_N"/>
</dbReference>
<dbReference type="InterPro" id="IPR042097">
    <property type="entry name" value="Aminopeptidase_N-like_N_sf"/>
</dbReference>
<dbReference type="InterPro" id="IPR038438">
    <property type="entry name" value="PepN_Ig-like_sf"/>
</dbReference>
<dbReference type="InterPro" id="IPR001930">
    <property type="entry name" value="Peptidase_M1"/>
</dbReference>
<dbReference type="InterPro" id="IPR014782">
    <property type="entry name" value="Peptidase_M1_dom"/>
</dbReference>
<dbReference type="InterPro" id="IPR012779">
    <property type="entry name" value="Peptidase_M1_pepN"/>
</dbReference>
<dbReference type="InterPro" id="IPR024601">
    <property type="entry name" value="Peptidase_M1_pepN_C"/>
</dbReference>
<dbReference type="InterPro" id="IPR037144">
    <property type="entry name" value="Peptidase_M1_pepN_C_sf"/>
</dbReference>
<dbReference type="InterPro" id="IPR035414">
    <property type="entry name" value="Peptidase_M1_pepN_Ig-like"/>
</dbReference>
<dbReference type="InterPro" id="IPR027268">
    <property type="entry name" value="Peptidase_M4/M1_CTD_sf"/>
</dbReference>
<dbReference type="NCBIfam" id="TIGR02414">
    <property type="entry name" value="pepN_proteo"/>
    <property type="match status" value="1"/>
</dbReference>
<dbReference type="PANTHER" id="PTHR46322">
    <property type="entry name" value="PUROMYCIN-SENSITIVE AMINOPEPTIDASE"/>
    <property type="match status" value="1"/>
</dbReference>
<dbReference type="PANTHER" id="PTHR46322:SF1">
    <property type="entry name" value="PUROMYCIN-SENSITIVE AMINOPEPTIDASE"/>
    <property type="match status" value="1"/>
</dbReference>
<dbReference type="Pfam" id="PF11940">
    <property type="entry name" value="DUF3458"/>
    <property type="match status" value="1"/>
</dbReference>
<dbReference type="Pfam" id="PF17432">
    <property type="entry name" value="DUF3458_C"/>
    <property type="match status" value="1"/>
</dbReference>
<dbReference type="Pfam" id="PF01433">
    <property type="entry name" value="Peptidase_M1"/>
    <property type="match status" value="1"/>
</dbReference>
<dbReference type="Pfam" id="PF17900">
    <property type="entry name" value="Peptidase_M1_N"/>
    <property type="match status" value="1"/>
</dbReference>
<dbReference type="PRINTS" id="PR00756">
    <property type="entry name" value="ALADIPTASE"/>
</dbReference>
<dbReference type="SUPFAM" id="SSF63737">
    <property type="entry name" value="Leukotriene A4 hydrolase N-terminal domain"/>
    <property type="match status" value="1"/>
</dbReference>
<dbReference type="SUPFAM" id="SSF55486">
    <property type="entry name" value="Metalloproteases ('zincins'), catalytic domain"/>
    <property type="match status" value="1"/>
</dbReference>
<dbReference type="PROSITE" id="PS00142">
    <property type="entry name" value="ZINC_PROTEASE"/>
    <property type="match status" value="1"/>
</dbReference>
<keyword id="KW-0031">Aminopeptidase</keyword>
<keyword id="KW-0378">Hydrolase</keyword>
<keyword id="KW-0479">Metal-binding</keyword>
<keyword id="KW-0482">Metalloprotease</keyword>
<keyword id="KW-0645">Protease</keyword>
<keyword id="KW-1185">Reference proteome</keyword>
<keyword id="KW-0862">Zinc</keyword>
<reference key="1">
    <citation type="journal article" date="2001" name="Proc. Natl. Acad. Sci. U.S.A.">
        <title>Complete genome sequence of Caulobacter crescentus.</title>
        <authorList>
            <person name="Nierman W.C."/>
            <person name="Feldblyum T.V."/>
            <person name="Laub M.T."/>
            <person name="Paulsen I.T."/>
            <person name="Nelson K.E."/>
            <person name="Eisen J.A."/>
            <person name="Heidelberg J.F."/>
            <person name="Alley M.R.K."/>
            <person name="Ohta N."/>
            <person name="Maddock J.R."/>
            <person name="Potocka I."/>
            <person name="Nelson W.C."/>
            <person name="Newton A."/>
            <person name="Stephens C."/>
            <person name="Phadke N.D."/>
            <person name="Ely B."/>
            <person name="DeBoy R.T."/>
            <person name="Dodson R.J."/>
            <person name="Durkin A.S."/>
            <person name="Gwinn M.L."/>
            <person name="Haft D.H."/>
            <person name="Kolonay J.F."/>
            <person name="Smit J."/>
            <person name="Craven M.B."/>
            <person name="Khouri H.M."/>
            <person name="Shetty J."/>
            <person name="Berry K.J."/>
            <person name="Utterback T.R."/>
            <person name="Tran K."/>
            <person name="Wolf A.M."/>
            <person name="Vamathevan J.J."/>
            <person name="Ermolaeva M.D."/>
            <person name="White O."/>
            <person name="Salzberg S.L."/>
            <person name="Venter J.C."/>
            <person name="Shapiro L."/>
            <person name="Fraser C.M."/>
        </authorList>
    </citation>
    <scope>NUCLEOTIDE SEQUENCE [LARGE SCALE GENOMIC DNA]</scope>
    <source>
        <strain>ATCC 19089 / CIP 103742 / CB 15</strain>
    </source>
</reference>
<reference key="2">
    <citation type="journal article" date="1993" name="Proc. Natl. Acad. Sci. U.S.A.">
        <title>A histidine protein kinase is involved in polar organelle development in Caulobacter crescentus.</title>
        <authorList>
            <person name="Wang S.P."/>
            <person name="Sharma P.L."/>
            <person name="Schoenlein P.V."/>
            <person name="Ely B."/>
        </authorList>
    </citation>
    <scope>NUCLEOTIDE SEQUENCE [GENOMIC DNA] OF 725-863</scope>
    <source>
        <strain>ATCC 19089 / CIP 103742 / CB 15</strain>
    </source>
</reference>